<accession>B0TMV5</accession>
<evidence type="ECO:0000255" key="1">
    <source>
        <dbReference type="HAMAP-Rule" id="MF_00258"/>
    </source>
</evidence>
<comment type="function">
    <text evidence="1">Provides the (R)-glutamate required for cell wall biosynthesis.</text>
</comment>
<comment type="catalytic activity">
    <reaction evidence="1">
        <text>L-glutamate = D-glutamate</text>
        <dbReference type="Rhea" id="RHEA:12813"/>
        <dbReference type="ChEBI" id="CHEBI:29985"/>
        <dbReference type="ChEBI" id="CHEBI:29986"/>
        <dbReference type="EC" id="5.1.1.3"/>
    </reaction>
</comment>
<comment type="pathway">
    <text evidence="1">Cell wall biogenesis; peptidoglycan biosynthesis.</text>
</comment>
<comment type="similarity">
    <text evidence="1">Belongs to the aspartate/glutamate racemases family.</text>
</comment>
<keyword id="KW-0133">Cell shape</keyword>
<keyword id="KW-0961">Cell wall biogenesis/degradation</keyword>
<keyword id="KW-0413">Isomerase</keyword>
<keyword id="KW-0573">Peptidoglycan synthesis</keyword>
<feature type="chain" id="PRO_1000078572" description="Glutamate racemase">
    <location>
        <begin position="1"/>
        <end position="266"/>
    </location>
</feature>
<feature type="active site" description="Proton donor/acceptor" evidence="1">
    <location>
        <position position="73"/>
    </location>
</feature>
<feature type="active site" description="Proton donor/acceptor" evidence="1">
    <location>
        <position position="183"/>
    </location>
</feature>
<feature type="binding site" evidence="1">
    <location>
        <begin position="9"/>
        <end position="10"/>
    </location>
    <ligand>
        <name>substrate</name>
    </ligand>
</feature>
<feature type="binding site" evidence="1">
    <location>
        <begin position="41"/>
        <end position="42"/>
    </location>
    <ligand>
        <name>substrate</name>
    </ligand>
</feature>
<feature type="binding site" evidence="1">
    <location>
        <begin position="74"/>
        <end position="75"/>
    </location>
    <ligand>
        <name>substrate</name>
    </ligand>
</feature>
<feature type="binding site" evidence="1">
    <location>
        <begin position="184"/>
        <end position="185"/>
    </location>
    <ligand>
        <name>substrate</name>
    </ligand>
</feature>
<sequence>MSGPIVIFDSGIGGLSIFDEIKKVLPDQGYCYLFDNARLPYGELEESVLIKGCVDLICEQVKRIDAVLVVVACNSASTLVLPGLRARLSIPIVGVVPAIKPAAQISKTRHIGLLATHGTIKRSYTRELIKEFAGDCKVDLFGSSELVMLAEAKLAGEKLDLIKLESQLKPIQHSDLDTLVLGCTHFPIIADEIQQVLGAGVKLLDSGKAIAQRVSYLLENIEDKLDNSAGELMAIYTTEEITPGLATRLAEKGFTTIASRSSANLD</sequence>
<organism>
    <name type="scientific">Shewanella halifaxensis (strain HAW-EB4)</name>
    <dbReference type="NCBI Taxonomy" id="458817"/>
    <lineage>
        <taxon>Bacteria</taxon>
        <taxon>Pseudomonadati</taxon>
        <taxon>Pseudomonadota</taxon>
        <taxon>Gammaproteobacteria</taxon>
        <taxon>Alteromonadales</taxon>
        <taxon>Shewanellaceae</taxon>
        <taxon>Shewanella</taxon>
    </lineage>
</organism>
<name>MURI_SHEHH</name>
<proteinExistence type="inferred from homology"/>
<gene>
    <name evidence="1" type="primary">murI</name>
    <name type="ordered locus">Shal_4153</name>
</gene>
<protein>
    <recommendedName>
        <fullName evidence="1">Glutamate racemase</fullName>
        <ecNumber evidence="1">5.1.1.3</ecNumber>
    </recommendedName>
</protein>
<dbReference type="EC" id="5.1.1.3" evidence="1"/>
<dbReference type="EMBL" id="CP000931">
    <property type="protein sequence ID" value="ABZ78693.1"/>
    <property type="molecule type" value="Genomic_DNA"/>
</dbReference>
<dbReference type="RefSeq" id="WP_012279197.1">
    <property type="nucleotide sequence ID" value="NC_010334.1"/>
</dbReference>
<dbReference type="SMR" id="B0TMV5"/>
<dbReference type="STRING" id="458817.Shal_4153"/>
<dbReference type="KEGG" id="shl:Shal_4153"/>
<dbReference type="eggNOG" id="COG0796">
    <property type="taxonomic scope" value="Bacteria"/>
</dbReference>
<dbReference type="HOGENOM" id="CLU_052344_2_0_6"/>
<dbReference type="OrthoDB" id="9801055at2"/>
<dbReference type="UniPathway" id="UPA00219"/>
<dbReference type="Proteomes" id="UP000001317">
    <property type="component" value="Chromosome"/>
</dbReference>
<dbReference type="GO" id="GO:0008881">
    <property type="term" value="F:glutamate racemase activity"/>
    <property type="evidence" value="ECO:0007669"/>
    <property type="project" value="UniProtKB-UniRule"/>
</dbReference>
<dbReference type="GO" id="GO:0071555">
    <property type="term" value="P:cell wall organization"/>
    <property type="evidence" value="ECO:0007669"/>
    <property type="project" value="UniProtKB-KW"/>
</dbReference>
<dbReference type="GO" id="GO:0009252">
    <property type="term" value="P:peptidoglycan biosynthetic process"/>
    <property type="evidence" value="ECO:0007669"/>
    <property type="project" value="UniProtKB-UniRule"/>
</dbReference>
<dbReference type="GO" id="GO:0008360">
    <property type="term" value="P:regulation of cell shape"/>
    <property type="evidence" value="ECO:0007669"/>
    <property type="project" value="UniProtKB-KW"/>
</dbReference>
<dbReference type="FunFam" id="3.40.50.1860:FF:000001">
    <property type="entry name" value="Glutamate racemase"/>
    <property type="match status" value="1"/>
</dbReference>
<dbReference type="Gene3D" id="3.40.50.1860">
    <property type="match status" value="2"/>
</dbReference>
<dbReference type="HAMAP" id="MF_00258">
    <property type="entry name" value="Glu_racemase"/>
    <property type="match status" value="1"/>
</dbReference>
<dbReference type="InterPro" id="IPR015942">
    <property type="entry name" value="Asp/Glu/hydantoin_racemase"/>
</dbReference>
<dbReference type="InterPro" id="IPR001920">
    <property type="entry name" value="Asp/Glu_race"/>
</dbReference>
<dbReference type="InterPro" id="IPR018187">
    <property type="entry name" value="Asp/Glu_racemase_AS_1"/>
</dbReference>
<dbReference type="InterPro" id="IPR033134">
    <property type="entry name" value="Asp/Glu_racemase_AS_2"/>
</dbReference>
<dbReference type="InterPro" id="IPR004391">
    <property type="entry name" value="Glu_race"/>
</dbReference>
<dbReference type="NCBIfam" id="TIGR00067">
    <property type="entry name" value="glut_race"/>
    <property type="match status" value="1"/>
</dbReference>
<dbReference type="PANTHER" id="PTHR21198">
    <property type="entry name" value="GLUTAMATE RACEMASE"/>
    <property type="match status" value="1"/>
</dbReference>
<dbReference type="PANTHER" id="PTHR21198:SF2">
    <property type="entry name" value="GLUTAMATE RACEMASE"/>
    <property type="match status" value="1"/>
</dbReference>
<dbReference type="Pfam" id="PF01177">
    <property type="entry name" value="Asp_Glu_race"/>
    <property type="match status" value="1"/>
</dbReference>
<dbReference type="SUPFAM" id="SSF53681">
    <property type="entry name" value="Aspartate/glutamate racemase"/>
    <property type="match status" value="2"/>
</dbReference>
<dbReference type="PROSITE" id="PS00923">
    <property type="entry name" value="ASP_GLU_RACEMASE_1"/>
    <property type="match status" value="1"/>
</dbReference>
<dbReference type="PROSITE" id="PS00924">
    <property type="entry name" value="ASP_GLU_RACEMASE_2"/>
    <property type="match status" value="1"/>
</dbReference>
<reference key="1">
    <citation type="submission" date="2008-01" db="EMBL/GenBank/DDBJ databases">
        <title>Complete sequence of Shewanella halifaxensis HAW-EB4.</title>
        <authorList>
            <consortium name="US DOE Joint Genome Institute"/>
            <person name="Copeland A."/>
            <person name="Lucas S."/>
            <person name="Lapidus A."/>
            <person name="Glavina del Rio T."/>
            <person name="Dalin E."/>
            <person name="Tice H."/>
            <person name="Bruce D."/>
            <person name="Goodwin L."/>
            <person name="Pitluck S."/>
            <person name="Sims D."/>
            <person name="Brettin T."/>
            <person name="Detter J.C."/>
            <person name="Han C."/>
            <person name="Kuske C.R."/>
            <person name="Schmutz J."/>
            <person name="Larimer F."/>
            <person name="Land M."/>
            <person name="Hauser L."/>
            <person name="Kyrpides N."/>
            <person name="Kim E."/>
            <person name="Zhao J.-S."/>
            <person name="Richardson P."/>
        </authorList>
    </citation>
    <scope>NUCLEOTIDE SEQUENCE [LARGE SCALE GENOMIC DNA]</scope>
    <source>
        <strain>HAW-EB4</strain>
    </source>
</reference>